<dbReference type="EC" id="6.1.1.22" evidence="1"/>
<dbReference type="EMBL" id="CP000046">
    <property type="protein sequence ID" value="AAW36689.1"/>
    <property type="molecule type" value="Genomic_DNA"/>
</dbReference>
<dbReference type="RefSeq" id="WP_000858789.1">
    <property type="nucleotide sequence ID" value="NZ_JBGOFO010000003.1"/>
</dbReference>
<dbReference type="SMR" id="Q5HFW9"/>
<dbReference type="KEGG" id="sac:SACOL1494"/>
<dbReference type="HOGENOM" id="CLU_004553_2_0_9"/>
<dbReference type="Proteomes" id="UP000000530">
    <property type="component" value="Chromosome"/>
</dbReference>
<dbReference type="GO" id="GO:0005737">
    <property type="term" value="C:cytoplasm"/>
    <property type="evidence" value="ECO:0007669"/>
    <property type="project" value="UniProtKB-SubCell"/>
</dbReference>
<dbReference type="GO" id="GO:0004816">
    <property type="term" value="F:asparagine-tRNA ligase activity"/>
    <property type="evidence" value="ECO:0007669"/>
    <property type="project" value="UniProtKB-UniRule"/>
</dbReference>
<dbReference type="GO" id="GO:0005524">
    <property type="term" value="F:ATP binding"/>
    <property type="evidence" value="ECO:0007669"/>
    <property type="project" value="UniProtKB-UniRule"/>
</dbReference>
<dbReference type="GO" id="GO:0140096">
    <property type="term" value="F:catalytic activity, acting on a protein"/>
    <property type="evidence" value="ECO:0007669"/>
    <property type="project" value="UniProtKB-ARBA"/>
</dbReference>
<dbReference type="GO" id="GO:0003676">
    <property type="term" value="F:nucleic acid binding"/>
    <property type="evidence" value="ECO:0007669"/>
    <property type="project" value="InterPro"/>
</dbReference>
<dbReference type="GO" id="GO:0016740">
    <property type="term" value="F:transferase activity"/>
    <property type="evidence" value="ECO:0007669"/>
    <property type="project" value="UniProtKB-ARBA"/>
</dbReference>
<dbReference type="GO" id="GO:0006421">
    <property type="term" value="P:asparaginyl-tRNA aminoacylation"/>
    <property type="evidence" value="ECO:0007669"/>
    <property type="project" value="UniProtKB-UniRule"/>
</dbReference>
<dbReference type="CDD" id="cd04323">
    <property type="entry name" value="AsnRS_cyto_like_N"/>
    <property type="match status" value="1"/>
</dbReference>
<dbReference type="CDD" id="cd00776">
    <property type="entry name" value="AsxRS_core"/>
    <property type="match status" value="1"/>
</dbReference>
<dbReference type="Gene3D" id="3.30.930.10">
    <property type="entry name" value="Bira Bifunctional Protein, Domain 2"/>
    <property type="match status" value="1"/>
</dbReference>
<dbReference type="Gene3D" id="2.40.50.140">
    <property type="entry name" value="Nucleic acid-binding proteins"/>
    <property type="match status" value="1"/>
</dbReference>
<dbReference type="HAMAP" id="MF_00534">
    <property type="entry name" value="Asn_tRNA_synth"/>
    <property type="match status" value="1"/>
</dbReference>
<dbReference type="InterPro" id="IPR004364">
    <property type="entry name" value="Aa-tRNA-synt_II"/>
</dbReference>
<dbReference type="InterPro" id="IPR006195">
    <property type="entry name" value="aa-tRNA-synth_II"/>
</dbReference>
<dbReference type="InterPro" id="IPR045864">
    <property type="entry name" value="aa-tRNA-synth_II/BPL/LPL"/>
</dbReference>
<dbReference type="InterPro" id="IPR004522">
    <property type="entry name" value="Asn-tRNA-ligase"/>
</dbReference>
<dbReference type="InterPro" id="IPR002312">
    <property type="entry name" value="Asp/Asn-tRNA-synth_IIb"/>
</dbReference>
<dbReference type="InterPro" id="IPR012340">
    <property type="entry name" value="NA-bd_OB-fold"/>
</dbReference>
<dbReference type="InterPro" id="IPR004365">
    <property type="entry name" value="NA-bd_OB_tRNA"/>
</dbReference>
<dbReference type="NCBIfam" id="TIGR00457">
    <property type="entry name" value="asnS"/>
    <property type="match status" value="1"/>
</dbReference>
<dbReference type="NCBIfam" id="NF003037">
    <property type="entry name" value="PRK03932.1"/>
    <property type="match status" value="1"/>
</dbReference>
<dbReference type="NCBIfam" id="NF003483">
    <property type="entry name" value="PRK05159.1"/>
    <property type="match status" value="1"/>
</dbReference>
<dbReference type="PANTHER" id="PTHR22594:SF34">
    <property type="entry name" value="ASPARAGINE--TRNA LIGASE, MITOCHONDRIAL-RELATED"/>
    <property type="match status" value="1"/>
</dbReference>
<dbReference type="PANTHER" id="PTHR22594">
    <property type="entry name" value="ASPARTYL/LYSYL-TRNA SYNTHETASE"/>
    <property type="match status" value="1"/>
</dbReference>
<dbReference type="Pfam" id="PF00152">
    <property type="entry name" value="tRNA-synt_2"/>
    <property type="match status" value="1"/>
</dbReference>
<dbReference type="Pfam" id="PF01336">
    <property type="entry name" value="tRNA_anti-codon"/>
    <property type="match status" value="1"/>
</dbReference>
<dbReference type="PRINTS" id="PR01042">
    <property type="entry name" value="TRNASYNTHASP"/>
</dbReference>
<dbReference type="SUPFAM" id="SSF55681">
    <property type="entry name" value="Class II aaRS and biotin synthetases"/>
    <property type="match status" value="1"/>
</dbReference>
<dbReference type="SUPFAM" id="SSF50249">
    <property type="entry name" value="Nucleic acid-binding proteins"/>
    <property type="match status" value="1"/>
</dbReference>
<dbReference type="PROSITE" id="PS50862">
    <property type="entry name" value="AA_TRNA_LIGASE_II"/>
    <property type="match status" value="1"/>
</dbReference>
<feature type="chain" id="PRO_0000176447" description="Asparagine--tRNA ligase">
    <location>
        <begin position="1"/>
        <end position="430"/>
    </location>
</feature>
<comment type="catalytic activity">
    <reaction evidence="1">
        <text>tRNA(Asn) + L-asparagine + ATP = L-asparaginyl-tRNA(Asn) + AMP + diphosphate + H(+)</text>
        <dbReference type="Rhea" id="RHEA:11180"/>
        <dbReference type="Rhea" id="RHEA-COMP:9659"/>
        <dbReference type="Rhea" id="RHEA-COMP:9674"/>
        <dbReference type="ChEBI" id="CHEBI:15378"/>
        <dbReference type="ChEBI" id="CHEBI:30616"/>
        <dbReference type="ChEBI" id="CHEBI:33019"/>
        <dbReference type="ChEBI" id="CHEBI:58048"/>
        <dbReference type="ChEBI" id="CHEBI:78442"/>
        <dbReference type="ChEBI" id="CHEBI:78515"/>
        <dbReference type="ChEBI" id="CHEBI:456215"/>
        <dbReference type="EC" id="6.1.1.22"/>
    </reaction>
</comment>
<comment type="subunit">
    <text evidence="1">Homodimer.</text>
</comment>
<comment type="subcellular location">
    <subcellularLocation>
        <location evidence="1">Cytoplasm</location>
    </subcellularLocation>
</comment>
<comment type="similarity">
    <text evidence="1">Belongs to the class-II aminoacyl-tRNA synthetase family.</text>
</comment>
<protein>
    <recommendedName>
        <fullName evidence="1">Asparagine--tRNA ligase</fullName>
        <ecNumber evidence="1">6.1.1.22</ecNumber>
    </recommendedName>
    <alternativeName>
        <fullName evidence="1">Asparaginyl-tRNA synthetase</fullName>
        <shortName evidence="1">AsnRS</shortName>
    </alternativeName>
</protein>
<reference key="1">
    <citation type="journal article" date="2005" name="J. Bacteriol.">
        <title>Insights on evolution of virulence and resistance from the complete genome analysis of an early methicillin-resistant Staphylococcus aureus strain and a biofilm-producing methicillin-resistant Staphylococcus epidermidis strain.</title>
        <authorList>
            <person name="Gill S.R."/>
            <person name="Fouts D.E."/>
            <person name="Archer G.L."/>
            <person name="Mongodin E.F."/>
            <person name="DeBoy R.T."/>
            <person name="Ravel J."/>
            <person name="Paulsen I.T."/>
            <person name="Kolonay J.F."/>
            <person name="Brinkac L.M."/>
            <person name="Beanan M.J."/>
            <person name="Dodson R.J."/>
            <person name="Daugherty S.C."/>
            <person name="Madupu R."/>
            <person name="Angiuoli S.V."/>
            <person name="Durkin A.S."/>
            <person name="Haft D.H."/>
            <person name="Vamathevan J.J."/>
            <person name="Khouri H."/>
            <person name="Utterback T.R."/>
            <person name="Lee C."/>
            <person name="Dimitrov G."/>
            <person name="Jiang L."/>
            <person name="Qin H."/>
            <person name="Weidman J."/>
            <person name="Tran K."/>
            <person name="Kang K.H."/>
            <person name="Hance I.R."/>
            <person name="Nelson K.E."/>
            <person name="Fraser C.M."/>
        </authorList>
    </citation>
    <scope>NUCLEOTIDE SEQUENCE [LARGE SCALE GENOMIC DNA]</scope>
    <source>
        <strain>COL</strain>
    </source>
</reference>
<gene>
    <name evidence="1" type="primary">asnS</name>
    <name type="ordered locus">SACOL1494</name>
</gene>
<name>SYN_STAAC</name>
<sequence>MKTTIKQAKDHLNQDVTIGAWLTNKRSSGKIAFLQLRDGTGFMQGVVVKSEVDEEVFKLAKEITQESSLYVTGTITEDNRSDLGYEMQVKSIEVISEAHDYPITPKNHGTEFLMDHRHLWLRSKKQHAVMKIRNEVIRATYEFFNKDGFTKVDPPILTASAPEGTSELFHTKYFDQDAFLSQSGQLYLEAAAMAHGKVFSFGPTFRAEKSKTRRHLIEFWMIEGEMAFTNHAESLEIQEQYVTHVVKSVLENCKLELKILERDTSKLEKVATPFPRISYDDAIEFLKAEGFDDIEWGEDFGAPHETAIANHYDLPVFITNYPTKIKPFYMQPNPENEETVLCADLIAPEGYGEIIGGSERVDDLELLEQRVKEHGLDEEAYSYYLDLRRYGSVPHCGFGLGLERTVAWISGVEHVRETAPFPRLLNRLYP</sequence>
<keyword id="KW-0030">Aminoacyl-tRNA synthetase</keyword>
<keyword id="KW-0067">ATP-binding</keyword>
<keyword id="KW-0963">Cytoplasm</keyword>
<keyword id="KW-0436">Ligase</keyword>
<keyword id="KW-0547">Nucleotide-binding</keyword>
<keyword id="KW-0648">Protein biosynthesis</keyword>
<accession>Q5HFW9</accession>
<organism>
    <name type="scientific">Staphylococcus aureus (strain COL)</name>
    <dbReference type="NCBI Taxonomy" id="93062"/>
    <lineage>
        <taxon>Bacteria</taxon>
        <taxon>Bacillati</taxon>
        <taxon>Bacillota</taxon>
        <taxon>Bacilli</taxon>
        <taxon>Bacillales</taxon>
        <taxon>Staphylococcaceae</taxon>
        <taxon>Staphylococcus</taxon>
    </lineage>
</organism>
<proteinExistence type="inferred from homology"/>
<evidence type="ECO:0000255" key="1">
    <source>
        <dbReference type="HAMAP-Rule" id="MF_00534"/>
    </source>
</evidence>